<evidence type="ECO:0000250" key="1">
    <source>
        <dbReference type="UniProtKB" id="P0A9N4"/>
    </source>
</evidence>
<evidence type="ECO:0000255" key="2"/>
<evidence type="ECO:0000255" key="3">
    <source>
        <dbReference type="PROSITE-ProRule" id="PRU00711"/>
    </source>
</evidence>
<evidence type="ECO:0000255" key="4">
    <source>
        <dbReference type="PROSITE-ProRule" id="PRU01266"/>
    </source>
</evidence>
<evidence type="ECO:0000269" key="5">
    <source>
    </source>
</evidence>
<evidence type="ECO:0000269" key="6">
    <source>
    </source>
</evidence>
<evidence type="ECO:0000269" key="7">
    <source>
    </source>
</evidence>
<evidence type="ECO:0000305" key="8"/>
<evidence type="ECO:0000305" key="9">
    <source>
    </source>
</evidence>
<accession>O87941</accession>
<proteinExistence type="evidence at transcript level"/>
<feature type="chain" id="PRO_0000418876" description="Benzylsuccinate synthase activating enzyme">
    <location>
        <begin position="1"/>
        <end position="331"/>
    </location>
</feature>
<feature type="domain" description="Radical SAM core" evidence="4">
    <location>
        <begin position="15"/>
        <end position="315"/>
    </location>
</feature>
<feature type="domain" description="4Fe-4S ferredoxin-type 1" evidence="3">
    <location>
        <begin position="46"/>
        <end position="75"/>
    </location>
</feature>
<feature type="domain" description="4Fe-4S ferredoxin-type 2" evidence="3">
    <location>
        <begin position="80"/>
        <end position="109"/>
    </location>
</feature>
<feature type="binding site" evidence="1">
    <location>
        <position position="29"/>
    </location>
    <ligand>
        <name>[4Fe-4S] cluster</name>
        <dbReference type="ChEBI" id="CHEBI:49883"/>
        <label>1</label>
        <note>4Fe-4S-S-AdoMet</note>
    </ligand>
</feature>
<feature type="binding site" evidence="1">
    <location>
        <position position="33"/>
    </location>
    <ligand>
        <name>[4Fe-4S] cluster</name>
        <dbReference type="ChEBI" id="CHEBI:49883"/>
        <label>1</label>
        <note>4Fe-4S-S-AdoMet</note>
    </ligand>
</feature>
<feature type="binding site" evidence="1">
    <location>
        <begin position="35"/>
        <end position="37"/>
    </location>
    <ligand>
        <name>S-adenosyl-L-methionine</name>
        <dbReference type="ChEBI" id="CHEBI:59789"/>
    </ligand>
</feature>
<feature type="binding site" evidence="1">
    <location>
        <position position="36"/>
    </location>
    <ligand>
        <name>[4Fe-4S] cluster</name>
        <dbReference type="ChEBI" id="CHEBI:49883"/>
        <label>1</label>
        <note>4Fe-4S-S-AdoMet</note>
    </ligand>
</feature>
<feature type="binding site" evidence="2">
    <location>
        <position position="55"/>
    </location>
    <ligand>
        <name>[4Fe-4S] cluster</name>
        <dbReference type="ChEBI" id="CHEBI:49883"/>
        <label>2</label>
    </ligand>
</feature>
<feature type="binding site" evidence="2">
    <location>
        <position position="58"/>
    </location>
    <ligand>
        <name>[4Fe-4S] cluster</name>
        <dbReference type="ChEBI" id="CHEBI:49883"/>
        <label>2</label>
    </ligand>
</feature>
<feature type="binding site" evidence="2">
    <location>
        <position position="61"/>
    </location>
    <ligand>
        <name>[4Fe-4S] cluster</name>
        <dbReference type="ChEBI" id="CHEBI:49883"/>
        <label>2</label>
    </ligand>
</feature>
<feature type="binding site" evidence="2">
    <location>
        <position position="65"/>
    </location>
    <ligand>
        <name>[4Fe-4S] cluster</name>
        <dbReference type="ChEBI" id="CHEBI:49883"/>
        <label>3</label>
    </ligand>
</feature>
<feature type="binding site" evidence="2">
    <location>
        <position position="89"/>
    </location>
    <ligand>
        <name>[4Fe-4S] cluster</name>
        <dbReference type="ChEBI" id="CHEBI:49883"/>
        <label>3</label>
    </ligand>
</feature>
<feature type="binding site" evidence="2">
    <location>
        <position position="92"/>
    </location>
    <ligand>
        <name>[4Fe-4S] cluster</name>
        <dbReference type="ChEBI" id="CHEBI:49883"/>
        <label>3</label>
    </ligand>
</feature>
<feature type="binding site" evidence="2">
    <location>
        <position position="95"/>
    </location>
    <ligand>
        <name>[4Fe-4S] cluster</name>
        <dbReference type="ChEBI" id="CHEBI:49883"/>
        <label>3</label>
    </ligand>
</feature>
<feature type="binding site" evidence="2">
    <location>
        <position position="99"/>
    </location>
    <ligand>
        <name>[4Fe-4S] cluster</name>
        <dbReference type="ChEBI" id="CHEBI:49883"/>
        <label>2</label>
    </ligand>
</feature>
<feature type="binding site" evidence="1">
    <location>
        <position position="139"/>
    </location>
    <ligand>
        <name>S-adenosyl-L-methionine</name>
        <dbReference type="ChEBI" id="CHEBI:59789"/>
    </ligand>
</feature>
<feature type="binding site" evidence="1">
    <location>
        <begin position="189"/>
        <end position="191"/>
    </location>
    <ligand>
        <name>S-adenosyl-L-methionine</name>
        <dbReference type="ChEBI" id="CHEBI:59789"/>
    </ligand>
</feature>
<feature type="binding site" evidence="1">
    <location>
        <position position="263"/>
    </location>
    <ligand>
        <name>S-adenosyl-L-methionine</name>
        <dbReference type="ChEBI" id="CHEBI:59789"/>
    </ligand>
</feature>
<gene>
    <name type="primary">bssD</name>
</gene>
<organism>
    <name type="scientific">Thauera aromatica</name>
    <dbReference type="NCBI Taxonomy" id="59405"/>
    <lineage>
        <taxon>Bacteria</taxon>
        <taxon>Pseudomonadati</taxon>
        <taxon>Pseudomonadota</taxon>
        <taxon>Betaproteobacteria</taxon>
        <taxon>Rhodocyclales</taxon>
        <taxon>Zoogloeaceae</taxon>
        <taxon>Thauera</taxon>
    </lineage>
</organism>
<dbReference type="EC" id="1.97.1.-" evidence="9"/>
<dbReference type="EMBL" id="AJ001848">
    <property type="protein sequence ID" value="CAA05050.2"/>
    <property type="molecule type" value="Genomic_DNA"/>
</dbReference>
<dbReference type="SMR" id="O87941"/>
<dbReference type="UniPathway" id="UPA00273"/>
<dbReference type="GO" id="GO:0051539">
    <property type="term" value="F:4 iron, 4 sulfur cluster binding"/>
    <property type="evidence" value="ECO:0007669"/>
    <property type="project" value="UniProtKB-KW"/>
</dbReference>
<dbReference type="GO" id="GO:0046872">
    <property type="term" value="F:metal ion binding"/>
    <property type="evidence" value="ECO:0007669"/>
    <property type="project" value="UniProtKB-KW"/>
</dbReference>
<dbReference type="GO" id="GO:0016491">
    <property type="term" value="F:oxidoreductase activity"/>
    <property type="evidence" value="ECO:0007669"/>
    <property type="project" value="UniProtKB-KW"/>
</dbReference>
<dbReference type="GO" id="GO:0042203">
    <property type="term" value="P:toluene catabolic process"/>
    <property type="evidence" value="ECO:0007669"/>
    <property type="project" value="UniProtKB-UniPathway"/>
</dbReference>
<dbReference type="Gene3D" id="3.30.70.20">
    <property type="match status" value="1"/>
</dbReference>
<dbReference type="Gene3D" id="3.20.20.70">
    <property type="entry name" value="Aldolase class I"/>
    <property type="match status" value="1"/>
</dbReference>
<dbReference type="InterPro" id="IPR017896">
    <property type="entry name" value="4Fe4S_Fe-S-bd"/>
</dbReference>
<dbReference type="InterPro" id="IPR017900">
    <property type="entry name" value="4Fe4S_Fe_S_CS"/>
</dbReference>
<dbReference type="InterPro" id="IPR013785">
    <property type="entry name" value="Aldolase_TIM"/>
</dbReference>
<dbReference type="InterPro" id="IPR034462">
    <property type="entry name" value="Benzylsuc_synthase_activase"/>
</dbReference>
<dbReference type="InterPro" id="IPR023880">
    <property type="entry name" value="Benzylsucc_Synthase_activating"/>
</dbReference>
<dbReference type="InterPro" id="IPR034457">
    <property type="entry name" value="Organic_radical-activating"/>
</dbReference>
<dbReference type="InterPro" id="IPR012839">
    <property type="entry name" value="Organic_radical_activase"/>
</dbReference>
<dbReference type="InterPro" id="IPR001989">
    <property type="entry name" value="Radical_activat_CS"/>
</dbReference>
<dbReference type="InterPro" id="IPR007197">
    <property type="entry name" value="rSAM"/>
</dbReference>
<dbReference type="NCBIfam" id="TIGR02494">
    <property type="entry name" value="PFLE_PFLC"/>
    <property type="match status" value="1"/>
</dbReference>
<dbReference type="NCBIfam" id="TIGR04003">
    <property type="entry name" value="rSAM_BssD"/>
    <property type="match status" value="1"/>
</dbReference>
<dbReference type="PANTHER" id="PTHR30352:SF4">
    <property type="entry name" value="PYRUVATE FORMATE-LYASE 2-ACTIVATING ENZYME"/>
    <property type="match status" value="1"/>
</dbReference>
<dbReference type="PANTHER" id="PTHR30352">
    <property type="entry name" value="PYRUVATE FORMATE-LYASE-ACTIVATING ENZYME"/>
    <property type="match status" value="1"/>
</dbReference>
<dbReference type="Pfam" id="PF13353">
    <property type="entry name" value="Fer4_12"/>
    <property type="match status" value="1"/>
</dbReference>
<dbReference type="Pfam" id="PF12838">
    <property type="entry name" value="Fer4_7"/>
    <property type="match status" value="1"/>
</dbReference>
<dbReference type="Pfam" id="PF04055">
    <property type="entry name" value="Radical_SAM"/>
    <property type="match status" value="1"/>
</dbReference>
<dbReference type="PIRSF" id="PIRSF000371">
    <property type="entry name" value="PFL_act_enz"/>
    <property type="match status" value="1"/>
</dbReference>
<dbReference type="SFLD" id="SFLDF00297">
    <property type="entry name" value="benzylsuccinate_synthase_activ"/>
    <property type="match status" value="1"/>
</dbReference>
<dbReference type="SFLD" id="SFLDG01066">
    <property type="entry name" value="organic_radical-activating_enz"/>
    <property type="match status" value="1"/>
</dbReference>
<dbReference type="SUPFAM" id="SSF54862">
    <property type="entry name" value="4Fe-4S ferredoxins"/>
    <property type="match status" value="1"/>
</dbReference>
<dbReference type="SUPFAM" id="SSF102114">
    <property type="entry name" value="Radical SAM enzymes"/>
    <property type="match status" value="1"/>
</dbReference>
<dbReference type="PROSITE" id="PS00198">
    <property type="entry name" value="4FE4S_FER_1"/>
    <property type="match status" value="1"/>
</dbReference>
<dbReference type="PROSITE" id="PS51379">
    <property type="entry name" value="4FE4S_FER_2"/>
    <property type="match status" value="2"/>
</dbReference>
<dbReference type="PROSITE" id="PS01087">
    <property type="entry name" value="RADICAL_ACTIVATING"/>
    <property type="match status" value="1"/>
</dbReference>
<dbReference type="PROSITE" id="PS51918">
    <property type="entry name" value="RADICAL_SAM"/>
    <property type="match status" value="1"/>
</dbReference>
<keyword id="KW-0004">4Fe-4S</keyword>
<keyword id="KW-0058">Aromatic hydrocarbons catabolism</keyword>
<keyword id="KW-0408">Iron</keyword>
<keyword id="KW-0411">Iron-sulfur</keyword>
<keyword id="KW-0479">Metal-binding</keyword>
<keyword id="KW-0560">Oxidoreductase</keyword>
<keyword id="KW-0677">Repeat</keyword>
<keyword id="KW-0949">S-adenosyl-L-methionine</keyword>
<name>BSSD_THAAR</name>
<sequence length="331" mass="36052">MKIPLITEIQRFSLQDGPGIRTTIFLKGCPLRCPWCHNPETQDARQEFYFYPDRCVGCGRCVAVCPAETSRLVRNSDGRTIVQIDRTNCQRCMRCVAACLTEARAIVGQHMSVDEILREALSDSAFYRNSGGGVTISGGDPLYFPDFTRQLASELHARGVHVAIETSCFPKQGKVVESMIGIVDLFIVDLKTLDAHKHLDVIGWPLAPILANLETLFAAGAKVRIHIPVIPGFNDSHADIDAYAEYLGKHAAAISGIDLLNFHCYGEGKYTFLGRAGSYQYSGVDETPAEKIVPLAQALKARGLAVTIGGIVGIANGKNELTGDIALEVHH</sequence>
<reference key="1">
    <citation type="journal article" date="1998" name="Mol. Microbiol.">
        <title>Biochemical and genetic characterization of benzylsuccinate synthase from Thauera aromatica: a new glycyl radical enzyme catalysing the first step in anaerobic toluene metabolism.</title>
        <authorList>
            <person name="Leuthner B."/>
            <person name="Leutwein C."/>
            <person name="Schulz H."/>
            <person name="Horth P."/>
            <person name="Haehnel W."/>
            <person name="Schiltz E."/>
            <person name="Schagger H."/>
            <person name="Heider J."/>
        </authorList>
    </citation>
    <scope>NUCLEOTIDE SEQUENCE [GENOMIC DNA]</scope>
    <scope>FUNCTION</scope>
    <scope>PATHWAY</scope>
    <scope>INDUCTION</scope>
    <source>
        <strain>DSM 6984 / CIP 107765 / K172</strain>
    </source>
</reference>
<reference key="2">
    <citation type="journal article" date="1998" name="FEMS Microbiol. Lett.">
        <title>A two-component system involved in regulation of anaerobic toluene metabolism in Thauera aromatica.</title>
        <authorList>
            <person name="Leuthner B."/>
            <person name="Heider J."/>
        </authorList>
    </citation>
    <scope>INDUCTION</scope>
    <source>
        <strain>DSM 6984 / CIP 107765 / K172</strain>
    </source>
</reference>
<reference key="3">
    <citation type="journal article" date="2002" name="Arch. Microbiol.">
        <title>Operon structure and expression of the genes for benzylsuccinate synthase in Thauera aromatica strain K172.</title>
        <authorList>
            <person name="Hermuth K."/>
            <person name="Leuthner B."/>
            <person name="Heider J."/>
        </authorList>
    </citation>
    <scope>INDUCTION</scope>
    <source>
        <strain>DSM 6984 / CIP 107765 / K172</strain>
    </source>
</reference>
<comment type="function">
    <text evidence="9">Activation of benzylsuccinate synthase under anaerobic conditions by generation of an organic free radical, using S-adenosylmethionine and reduced flavodoxin as cosubstrates to produce 5'-deoxy-adenosine.</text>
</comment>
<comment type="catalytic activity">
    <reaction evidence="9">
        <text>glycyl-[protein] + reduced [flavodoxin] + S-adenosyl-L-methionine = glycin-2-yl radical-[protein] + semiquinone [flavodoxin] + 5'-deoxyadenosine + L-methionine + H(+)</text>
        <dbReference type="Rhea" id="RHEA:61976"/>
        <dbReference type="Rhea" id="RHEA-COMP:10622"/>
        <dbReference type="Rhea" id="RHEA-COMP:14480"/>
        <dbReference type="Rhea" id="RHEA-COMP:15993"/>
        <dbReference type="Rhea" id="RHEA-COMP:15994"/>
        <dbReference type="ChEBI" id="CHEBI:15378"/>
        <dbReference type="ChEBI" id="CHEBI:17319"/>
        <dbReference type="ChEBI" id="CHEBI:29947"/>
        <dbReference type="ChEBI" id="CHEBI:32722"/>
        <dbReference type="ChEBI" id="CHEBI:57618"/>
        <dbReference type="ChEBI" id="CHEBI:57844"/>
        <dbReference type="ChEBI" id="CHEBI:59789"/>
        <dbReference type="ChEBI" id="CHEBI:140311"/>
    </reaction>
</comment>
<comment type="cofactor">
    <cofactor evidence="8">
        <name>[4Fe-4S] cluster</name>
        <dbReference type="ChEBI" id="CHEBI:49883"/>
    </cofactor>
    <text evidence="8">Binds 3 [4Fe-4S] clusters. One cluster is coordinated with 3 cysteines and an exchangeable S-adenosyl-L-methionine.</text>
</comment>
<comment type="pathway">
    <text evidence="6">Xenobiotic degradation; toluene degradation [regulation].</text>
</comment>
<comment type="induction">
    <text evidence="5 6 7">Induced by toluene, probably via the TdiR/TdiS two-component regulatory system.</text>
</comment>
<comment type="similarity">
    <text evidence="8">Belongs to the organic radical-activating enzymes family.</text>
</comment>
<protein>
    <recommendedName>
        <fullName>Benzylsuccinate synthase activating enzyme</fullName>
        <ecNumber evidence="9">1.97.1.-</ecNumber>
    </recommendedName>
</protein>